<feature type="initiator methionine" description="Removed" evidence="2">
    <location>
        <position position="1"/>
    </location>
</feature>
<feature type="chain" id="PRO_0000170734" description="Mannitol 2-dehydrogenase">
    <location>
        <begin position="2"/>
        <end position="477"/>
    </location>
</feature>
<feature type="binding site" evidence="1">
    <location>
        <begin position="19"/>
        <end position="30"/>
    </location>
    <ligand>
        <name>NAD(+)</name>
        <dbReference type="ChEBI" id="CHEBI:57540"/>
    </ligand>
</feature>
<gene>
    <name type="primary">mtlK</name>
</gene>
<proteinExistence type="evidence at protein level"/>
<organism>
    <name type="scientific">Cereibacter sphaeroides</name>
    <name type="common">Rhodobacter sphaeroides</name>
    <dbReference type="NCBI Taxonomy" id="1063"/>
    <lineage>
        <taxon>Bacteria</taxon>
        <taxon>Pseudomonadati</taxon>
        <taxon>Pseudomonadota</taxon>
        <taxon>Alphaproteobacteria</taxon>
        <taxon>Rhodobacterales</taxon>
        <taxon>Paracoccaceae</taxon>
        <taxon>Cereibacter</taxon>
    </lineage>
</organism>
<keyword id="KW-0903">Direct protein sequencing</keyword>
<keyword id="KW-0520">NAD</keyword>
<keyword id="KW-0560">Oxidoreductase</keyword>
<evidence type="ECO:0000250" key="1"/>
<evidence type="ECO:0000269" key="2">
    <source>
    </source>
</evidence>
<evidence type="ECO:0000305" key="3"/>
<protein>
    <recommendedName>
        <fullName>Mannitol 2-dehydrogenase</fullName>
        <shortName>M2DH</shortName>
        <shortName>MDH</shortName>
        <ecNumber>1.1.1.67</ecNumber>
    </recommendedName>
</protein>
<reference key="1">
    <citation type="journal article" date="1993" name="J. Gen. Microbiol.">
        <title>Cloning, nucleotide sequence and characterization of the mannitol dehydrogenase gene from Rhodobacter sphaeroides.</title>
        <authorList>
            <person name="Schneider K.-H."/>
            <person name="Giffhorn F."/>
            <person name="Kaplan S."/>
        </authorList>
    </citation>
    <scope>NUCLEOTIDE SEQUENCE [GENOMIC DNA]</scope>
    <scope>PROTEIN SEQUENCE OF 2-44</scope>
    <source>
        <strain>DSM 8371 / Si4</strain>
    </source>
</reference>
<reference key="2">
    <citation type="submission" date="1994-03" db="EMBL/GenBank/DDBJ databases">
        <authorList>
            <person name="Schneider K.-H."/>
            <person name="Giffhorn F."/>
        </authorList>
    </citation>
    <scope>NUCLEOTIDE SEQUENCE [GENOMIC DNA]</scope>
    <source>
        <strain>DSM 8371 / Si4</strain>
    </source>
</reference>
<name>MTLK_CERSP</name>
<comment type="catalytic activity">
    <reaction>
        <text>D-mannitol + NAD(+) = D-fructose + NADH + H(+)</text>
        <dbReference type="Rhea" id="RHEA:12084"/>
        <dbReference type="ChEBI" id="CHEBI:15378"/>
        <dbReference type="ChEBI" id="CHEBI:16899"/>
        <dbReference type="ChEBI" id="CHEBI:37721"/>
        <dbReference type="ChEBI" id="CHEBI:57540"/>
        <dbReference type="ChEBI" id="CHEBI:57945"/>
        <dbReference type="EC" id="1.1.1.67"/>
    </reaction>
</comment>
<comment type="subunit">
    <text>Monomer.</text>
</comment>
<comment type="similarity">
    <text evidence="3">Belongs to the mannitol dehydrogenase family.</text>
</comment>
<sequence>MTRSVTRPSYDRKALTPGIVHIGVGNFHRAHQAVYLDDLFALGEGHDWAILGAGVRPTDARMREALAAQDNLSTVIELDPAGHRARQVGAMVGFLPVEADNAALIEAMSDPRIRIVSLTVTEGGYYVDASGAFDPTHPDIVADAAHPARPATAFGAILAALRARRDAGVTPFTVMSCDNLPGNGHVTRNAVVGLAELYDAELAGWVKAQVAFPNGMVDRITPATGPHERELAQGFGLADPVPVTCEPFRQWVIEDHFPAGRPALEKVGVTFTPHVHAYEAMKIRILNGGHAVIAYPSALMDIQLVHAAMAHPLIAAFLHKVEVEEILPHVPPVPDTSIPDYLTLIESRFSNPEIADTTRRLCLDGSNRQPKFIVPSLRDNLAAGTVPKGLVLLSALWCRYCFGTTDSGVVVEPNDPNWTALQDRARRAKETPAEWLAMTEVYGDLAQNDLLAAEFAAALEAVWRDGAEAVLRRFLAA</sequence>
<accession>P33216</accession>
<dbReference type="EC" id="1.1.1.67"/>
<dbReference type="EMBL" id="AF018073">
    <property type="protein sequence ID" value="AAC45771.1"/>
    <property type="molecule type" value="Genomic_DNA"/>
</dbReference>
<dbReference type="SMR" id="P33216"/>
<dbReference type="GO" id="GO:0050086">
    <property type="term" value="F:mannitol 2-dehydrogenase activity"/>
    <property type="evidence" value="ECO:0007669"/>
    <property type="project" value="UniProtKB-EC"/>
</dbReference>
<dbReference type="GO" id="GO:0019594">
    <property type="term" value="P:mannitol metabolic process"/>
    <property type="evidence" value="ECO:0007669"/>
    <property type="project" value="InterPro"/>
</dbReference>
<dbReference type="Gene3D" id="1.10.1040.10">
    <property type="entry name" value="N-(1-d-carboxylethyl)-l-norvaline Dehydrogenase, domain 2"/>
    <property type="match status" value="1"/>
</dbReference>
<dbReference type="Gene3D" id="3.40.50.720">
    <property type="entry name" value="NAD(P)-binding Rossmann-like Domain"/>
    <property type="match status" value="1"/>
</dbReference>
<dbReference type="InterPro" id="IPR008927">
    <property type="entry name" value="6-PGluconate_DH-like_C_sf"/>
</dbReference>
<dbReference type="InterPro" id="IPR013328">
    <property type="entry name" value="6PGD_dom2"/>
</dbReference>
<dbReference type="InterPro" id="IPR000669">
    <property type="entry name" value="Mannitol_DH"/>
</dbReference>
<dbReference type="InterPro" id="IPR050988">
    <property type="entry name" value="Mannitol_DH/Oxidoreductase"/>
</dbReference>
<dbReference type="InterPro" id="IPR013118">
    <property type="entry name" value="Mannitol_DH_C"/>
</dbReference>
<dbReference type="InterPro" id="IPR023027">
    <property type="entry name" value="Mannitol_DH_CS"/>
</dbReference>
<dbReference type="InterPro" id="IPR013131">
    <property type="entry name" value="Mannitol_DH_N"/>
</dbReference>
<dbReference type="InterPro" id="IPR036291">
    <property type="entry name" value="NAD(P)-bd_dom_sf"/>
</dbReference>
<dbReference type="PANTHER" id="PTHR43362:SF1">
    <property type="entry name" value="MANNITOL DEHYDROGENASE 2-RELATED"/>
    <property type="match status" value="1"/>
</dbReference>
<dbReference type="PANTHER" id="PTHR43362">
    <property type="entry name" value="MANNITOL DEHYDROGENASE DSF1-RELATED"/>
    <property type="match status" value="1"/>
</dbReference>
<dbReference type="Pfam" id="PF01232">
    <property type="entry name" value="Mannitol_dh"/>
    <property type="match status" value="1"/>
</dbReference>
<dbReference type="Pfam" id="PF08125">
    <property type="entry name" value="Mannitol_dh_C"/>
    <property type="match status" value="1"/>
</dbReference>
<dbReference type="PRINTS" id="PR00084">
    <property type="entry name" value="MTLDHDRGNASE"/>
</dbReference>
<dbReference type="SUPFAM" id="SSF48179">
    <property type="entry name" value="6-phosphogluconate dehydrogenase C-terminal domain-like"/>
    <property type="match status" value="1"/>
</dbReference>
<dbReference type="SUPFAM" id="SSF51735">
    <property type="entry name" value="NAD(P)-binding Rossmann-fold domains"/>
    <property type="match status" value="1"/>
</dbReference>
<dbReference type="PROSITE" id="PS00974">
    <property type="entry name" value="MANNITOL_DHGENASE"/>
    <property type="match status" value="1"/>
</dbReference>